<organism>
    <name type="scientific">Lactococcus lactis subsp. lactis (strain IL1403)</name>
    <name type="common">Streptococcus lactis</name>
    <dbReference type="NCBI Taxonomy" id="272623"/>
    <lineage>
        <taxon>Bacteria</taxon>
        <taxon>Bacillati</taxon>
        <taxon>Bacillota</taxon>
        <taxon>Bacilli</taxon>
        <taxon>Lactobacillales</taxon>
        <taxon>Streptococcaceae</taxon>
        <taxon>Lactococcus</taxon>
    </lineage>
</organism>
<protein>
    <recommendedName>
        <fullName evidence="1">tRNA-specific 2-thiouridylase MnmA</fullName>
        <ecNumber evidence="1">2.8.1.13</ecNumber>
    </recommendedName>
</protein>
<comment type="function">
    <text evidence="1">Catalyzes the 2-thiolation of uridine at the wobble position (U34) of tRNA, leading to the formation of s(2)U34.</text>
</comment>
<comment type="catalytic activity">
    <reaction evidence="1">
        <text>S-sulfanyl-L-cysteinyl-[protein] + uridine(34) in tRNA + AH2 + ATP = 2-thiouridine(34) in tRNA + L-cysteinyl-[protein] + A + AMP + diphosphate + H(+)</text>
        <dbReference type="Rhea" id="RHEA:47032"/>
        <dbReference type="Rhea" id="RHEA-COMP:10131"/>
        <dbReference type="Rhea" id="RHEA-COMP:11726"/>
        <dbReference type="Rhea" id="RHEA-COMP:11727"/>
        <dbReference type="Rhea" id="RHEA-COMP:11728"/>
        <dbReference type="ChEBI" id="CHEBI:13193"/>
        <dbReference type="ChEBI" id="CHEBI:15378"/>
        <dbReference type="ChEBI" id="CHEBI:17499"/>
        <dbReference type="ChEBI" id="CHEBI:29950"/>
        <dbReference type="ChEBI" id="CHEBI:30616"/>
        <dbReference type="ChEBI" id="CHEBI:33019"/>
        <dbReference type="ChEBI" id="CHEBI:61963"/>
        <dbReference type="ChEBI" id="CHEBI:65315"/>
        <dbReference type="ChEBI" id="CHEBI:87170"/>
        <dbReference type="ChEBI" id="CHEBI:456215"/>
        <dbReference type="EC" id="2.8.1.13"/>
    </reaction>
</comment>
<comment type="subcellular location">
    <subcellularLocation>
        <location evidence="1">Cytoplasm</location>
    </subcellularLocation>
</comment>
<comment type="similarity">
    <text evidence="1">Belongs to the MnmA/TRMU family.</text>
</comment>
<comment type="sequence caution" evidence="2">
    <conflict type="erroneous initiation">
        <sequence resource="EMBL-CDS" id="AAK04935"/>
    </conflict>
</comment>
<gene>
    <name evidence="1" type="primary">mnmA</name>
    <name type="synonym">trmU</name>
    <name type="ordered locus">LL0837</name>
    <name type="ORF">L52034</name>
</gene>
<evidence type="ECO:0000255" key="1">
    <source>
        <dbReference type="HAMAP-Rule" id="MF_00144"/>
    </source>
</evidence>
<evidence type="ECO:0000305" key="2"/>
<dbReference type="EC" id="2.8.1.13" evidence="1"/>
<dbReference type="EMBL" id="AE005176">
    <property type="protein sequence ID" value="AAK04935.1"/>
    <property type="status" value="ALT_INIT"/>
    <property type="molecule type" value="Genomic_DNA"/>
</dbReference>
<dbReference type="PIR" id="E86729">
    <property type="entry name" value="E86729"/>
</dbReference>
<dbReference type="RefSeq" id="NP_266993.1">
    <property type="nucleotide sequence ID" value="NC_002662.1"/>
</dbReference>
<dbReference type="RefSeq" id="WP_003132592.1">
    <property type="nucleotide sequence ID" value="NC_002662.1"/>
</dbReference>
<dbReference type="SMR" id="Q9CHA1"/>
<dbReference type="PaxDb" id="272623-L52034"/>
<dbReference type="EnsemblBacteria" id="AAK04935">
    <property type="protein sequence ID" value="AAK04935"/>
    <property type="gene ID" value="L52034"/>
</dbReference>
<dbReference type="GeneID" id="89632962"/>
<dbReference type="KEGG" id="lla:L52034"/>
<dbReference type="PATRIC" id="fig|272623.7.peg.894"/>
<dbReference type="eggNOG" id="COG0482">
    <property type="taxonomic scope" value="Bacteria"/>
</dbReference>
<dbReference type="HOGENOM" id="CLU_035188_1_0_9"/>
<dbReference type="OrthoDB" id="9800696at2"/>
<dbReference type="Proteomes" id="UP000002196">
    <property type="component" value="Chromosome"/>
</dbReference>
<dbReference type="GO" id="GO:0005737">
    <property type="term" value="C:cytoplasm"/>
    <property type="evidence" value="ECO:0007669"/>
    <property type="project" value="UniProtKB-SubCell"/>
</dbReference>
<dbReference type="GO" id="GO:0005524">
    <property type="term" value="F:ATP binding"/>
    <property type="evidence" value="ECO:0007669"/>
    <property type="project" value="UniProtKB-KW"/>
</dbReference>
<dbReference type="GO" id="GO:0000049">
    <property type="term" value="F:tRNA binding"/>
    <property type="evidence" value="ECO:0007669"/>
    <property type="project" value="UniProtKB-KW"/>
</dbReference>
<dbReference type="GO" id="GO:0103016">
    <property type="term" value="F:tRNA-uridine 2-sulfurtransferase activity"/>
    <property type="evidence" value="ECO:0007669"/>
    <property type="project" value="UniProtKB-EC"/>
</dbReference>
<dbReference type="GO" id="GO:0002143">
    <property type="term" value="P:tRNA wobble position uridine thiolation"/>
    <property type="evidence" value="ECO:0007669"/>
    <property type="project" value="TreeGrafter"/>
</dbReference>
<dbReference type="CDD" id="cd01998">
    <property type="entry name" value="MnmA_TRMU-like"/>
    <property type="match status" value="1"/>
</dbReference>
<dbReference type="FunFam" id="2.30.30.280:FF:000001">
    <property type="entry name" value="tRNA-specific 2-thiouridylase MnmA"/>
    <property type="match status" value="1"/>
</dbReference>
<dbReference type="FunFam" id="2.40.30.10:FF:000023">
    <property type="entry name" value="tRNA-specific 2-thiouridylase MnmA"/>
    <property type="match status" value="1"/>
</dbReference>
<dbReference type="FunFam" id="3.40.50.620:FF:000004">
    <property type="entry name" value="tRNA-specific 2-thiouridylase MnmA"/>
    <property type="match status" value="1"/>
</dbReference>
<dbReference type="Gene3D" id="2.30.30.280">
    <property type="entry name" value="Adenine nucleotide alpha hydrolases-like domains"/>
    <property type="match status" value="1"/>
</dbReference>
<dbReference type="Gene3D" id="3.40.50.620">
    <property type="entry name" value="HUPs"/>
    <property type="match status" value="1"/>
</dbReference>
<dbReference type="Gene3D" id="2.40.30.10">
    <property type="entry name" value="Translation factors"/>
    <property type="match status" value="1"/>
</dbReference>
<dbReference type="HAMAP" id="MF_00144">
    <property type="entry name" value="tRNA_thiouridyl_MnmA"/>
    <property type="match status" value="1"/>
</dbReference>
<dbReference type="InterPro" id="IPR004506">
    <property type="entry name" value="MnmA-like"/>
</dbReference>
<dbReference type="InterPro" id="IPR046885">
    <property type="entry name" value="MnmA-like_C"/>
</dbReference>
<dbReference type="InterPro" id="IPR046884">
    <property type="entry name" value="MnmA-like_central"/>
</dbReference>
<dbReference type="InterPro" id="IPR023382">
    <property type="entry name" value="MnmA-like_central_sf"/>
</dbReference>
<dbReference type="InterPro" id="IPR014729">
    <property type="entry name" value="Rossmann-like_a/b/a_fold"/>
</dbReference>
<dbReference type="NCBIfam" id="NF001138">
    <property type="entry name" value="PRK00143.1"/>
    <property type="match status" value="1"/>
</dbReference>
<dbReference type="NCBIfam" id="TIGR00420">
    <property type="entry name" value="trmU"/>
    <property type="match status" value="1"/>
</dbReference>
<dbReference type="PANTHER" id="PTHR11933:SF5">
    <property type="entry name" value="MITOCHONDRIAL TRNA-SPECIFIC 2-THIOURIDYLASE 1"/>
    <property type="match status" value="1"/>
</dbReference>
<dbReference type="PANTHER" id="PTHR11933">
    <property type="entry name" value="TRNA 5-METHYLAMINOMETHYL-2-THIOURIDYLATE -METHYLTRANSFERASE"/>
    <property type="match status" value="1"/>
</dbReference>
<dbReference type="Pfam" id="PF03054">
    <property type="entry name" value="tRNA_Me_trans"/>
    <property type="match status" value="1"/>
</dbReference>
<dbReference type="Pfam" id="PF20258">
    <property type="entry name" value="tRNA_Me_trans_C"/>
    <property type="match status" value="1"/>
</dbReference>
<dbReference type="Pfam" id="PF20259">
    <property type="entry name" value="tRNA_Me_trans_M"/>
    <property type="match status" value="1"/>
</dbReference>
<dbReference type="SUPFAM" id="SSF52402">
    <property type="entry name" value="Adenine nucleotide alpha hydrolases-like"/>
    <property type="match status" value="1"/>
</dbReference>
<feature type="chain" id="PRO_0000121642" description="tRNA-specific 2-thiouridylase MnmA">
    <location>
        <begin position="1"/>
        <end position="376"/>
    </location>
</feature>
<feature type="region of interest" description="Interaction with target base in tRNA" evidence="1">
    <location>
        <begin position="100"/>
        <end position="102"/>
    </location>
</feature>
<feature type="region of interest" description="Interaction with tRNA" evidence="1">
    <location>
        <begin position="152"/>
        <end position="154"/>
    </location>
</feature>
<feature type="region of interest" description="Interaction with tRNA" evidence="1">
    <location>
        <begin position="315"/>
        <end position="316"/>
    </location>
</feature>
<feature type="active site" description="Nucleophile" evidence="1">
    <location>
        <position position="105"/>
    </location>
</feature>
<feature type="active site" description="Cysteine persulfide intermediate" evidence="1">
    <location>
        <position position="202"/>
    </location>
</feature>
<feature type="binding site" evidence="1">
    <location>
        <begin position="14"/>
        <end position="21"/>
    </location>
    <ligand>
        <name>ATP</name>
        <dbReference type="ChEBI" id="CHEBI:30616"/>
    </ligand>
</feature>
<feature type="binding site" evidence="1">
    <location>
        <position position="40"/>
    </location>
    <ligand>
        <name>ATP</name>
        <dbReference type="ChEBI" id="CHEBI:30616"/>
    </ligand>
</feature>
<feature type="binding site" evidence="1">
    <location>
        <position position="129"/>
    </location>
    <ligand>
        <name>ATP</name>
        <dbReference type="ChEBI" id="CHEBI:30616"/>
    </ligand>
</feature>
<feature type="site" description="Interaction with tRNA" evidence="1">
    <location>
        <position position="130"/>
    </location>
</feature>
<feature type="site" description="Interaction with tRNA" evidence="1">
    <location>
        <position position="347"/>
    </location>
</feature>
<feature type="disulfide bond" description="Alternate" evidence="1">
    <location>
        <begin position="105"/>
        <end position="202"/>
    </location>
</feature>
<name>MNMA_LACLA</name>
<sequence>MSGKSPAQTRVVVGMSGGVDSSVTALLLKEQGYDVIGVFMKNWDDTDENGVCTATEDYKDVAAVADQIGVPYYSVNFEKEYWDRVFEYFLAEYRAGRTPNPDVMCNKEIKFKAFLDYAMELGADYVATGHYAQVRTDENGIVHMLRGADNNKDQTYFLSQLTQEQLKKTMFPLGHLEKPEVRKIAEKAGLATAKKKDSTGICFIGEKNFKKFLGEYLPAQPGKMMTLDGIEMGNHAGLMYYTIGQRGGLGIGGQHGQLTSDPWFVVGKDLTTNTLYVGQGFHHEHLYSTSLDASDLSFTREMPETFDLHCTAKFRYRQEDTGVTIHVNGDKVTVDFDEPVRAITPGQAVVFYDGEECLGGAMIDVAYKAQKVMQYQ</sequence>
<proteinExistence type="inferred from homology"/>
<reference key="1">
    <citation type="journal article" date="2001" name="Genome Res.">
        <title>The complete genome sequence of the lactic acid bacterium Lactococcus lactis ssp. lactis IL1403.</title>
        <authorList>
            <person name="Bolotin A."/>
            <person name="Wincker P."/>
            <person name="Mauger S."/>
            <person name="Jaillon O."/>
            <person name="Malarme K."/>
            <person name="Weissenbach J."/>
            <person name="Ehrlich S.D."/>
            <person name="Sorokin A."/>
        </authorList>
    </citation>
    <scope>NUCLEOTIDE SEQUENCE [LARGE SCALE GENOMIC DNA]</scope>
    <source>
        <strain>IL1403</strain>
    </source>
</reference>
<keyword id="KW-0067">ATP-binding</keyword>
<keyword id="KW-0963">Cytoplasm</keyword>
<keyword id="KW-1015">Disulfide bond</keyword>
<keyword id="KW-0547">Nucleotide-binding</keyword>
<keyword id="KW-1185">Reference proteome</keyword>
<keyword id="KW-0694">RNA-binding</keyword>
<keyword id="KW-0808">Transferase</keyword>
<keyword id="KW-0819">tRNA processing</keyword>
<keyword id="KW-0820">tRNA-binding</keyword>
<accession>Q9CHA1</accession>